<feature type="chain" id="PRO_1000058190" description="Ribonuclease T">
    <location>
        <begin position="1"/>
        <end position="224"/>
    </location>
</feature>
<feature type="domain" description="Exonuclease" evidence="1">
    <location>
        <begin position="20"/>
        <end position="194"/>
    </location>
</feature>
<feature type="active site" description="Proton donor/acceptor" evidence="1">
    <location>
        <position position="181"/>
    </location>
</feature>
<feature type="binding site" evidence="1">
    <location>
        <position position="23"/>
    </location>
    <ligand>
        <name>Mg(2+)</name>
        <dbReference type="ChEBI" id="CHEBI:18420"/>
        <label>1</label>
        <note>catalytic</note>
    </ligand>
</feature>
<feature type="binding site" evidence="1">
    <location>
        <position position="23"/>
    </location>
    <ligand>
        <name>Mg(2+)</name>
        <dbReference type="ChEBI" id="CHEBI:18420"/>
        <label>2</label>
        <note>catalytic</note>
    </ligand>
</feature>
<feature type="binding site" evidence="1">
    <location>
        <position position="25"/>
    </location>
    <ligand>
        <name>Mg(2+)</name>
        <dbReference type="ChEBI" id="CHEBI:18420"/>
        <label>2</label>
        <note>catalytic</note>
    </ligand>
</feature>
<feature type="binding site" evidence="1">
    <location>
        <position position="181"/>
    </location>
    <ligand>
        <name>Mg(2+)</name>
        <dbReference type="ChEBI" id="CHEBI:18420"/>
        <label>2</label>
        <note>catalytic</note>
    </ligand>
</feature>
<feature type="binding site" evidence="1">
    <location>
        <position position="186"/>
    </location>
    <ligand>
        <name>Mg(2+)</name>
        <dbReference type="ChEBI" id="CHEBI:18420"/>
        <label>2</label>
        <note>catalytic</note>
    </ligand>
</feature>
<feature type="site" description="Important for substrate binding and specificity" evidence="1">
    <location>
        <position position="29"/>
    </location>
</feature>
<feature type="site" description="Important for substrate binding and specificity" evidence="1">
    <location>
        <position position="77"/>
    </location>
</feature>
<feature type="site" description="Important for substrate binding and specificity" evidence="1">
    <location>
        <position position="124"/>
    </location>
</feature>
<feature type="site" description="Important for substrate binding and specificity" evidence="1">
    <location>
        <position position="146"/>
    </location>
</feature>
<keyword id="KW-0269">Exonuclease</keyword>
<keyword id="KW-0378">Hydrolase</keyword>
<keyword id="KW-0460">Magnesium</keyword>
<keyword id="KW-0479">Metal-binding</keyword>
<keyword id="KW-0540">Nuclease</keyword>
<keyword id="KW-0819">tRNA processing</keyword>
<accession>A4W9U3</accession>
<reference key="1">
    <citation type="journal article" date="2010" name="PLoS Genet.">
        <title>Genome sequence of the plant growth promoting endophytic bacterium Enterobacter sp. 638.</title>
        <authorList>
            <person name="Taghavi S."/>
            <person name="van der Lelie D."/>
            <person name="Hoffman A."/>
            <person name="Zhang Y.B."/>
            <person name="Walla M.D."/>
            <person name="Vangronsveld J."/>
            <person name="Newman L."/>
            <person name="Monchy S."/>
        </authorList>
    </citation>
    <scope>NUCLEOTIDE SEQUENCE [LARGE SCALE GENOMIC DNA]</scope>
    <source>
        <strain>638</strain>
    </source>
</reference>
<organism>
    <name type="scientific">Enterobacter sp. (strain 638)</name>
    <dbReference type="NCBI Taxonomy" id="399742"/>
    <lineage>
        <taxon>Bacteria</taxon>
        <taxon>Pseudomonadati</taxon>
        <taxon>Pseudomonadota</taxon>
        <taxon>Gammaproteobacteria</taxon>
        <taxon>Enterobacterales</taxon>
        <taxon>Enterobacteriaceae</taxon>
        <taxon>Enterobacter</taxon>
    </lineage>
</organism>
<comment type="function">
    <text evidence="1">Trims short 3' overhangs of a variety of RNA species, leaving a one or two nucleotide 3' overhang. Responsible for the end-turnover of tRNA: specifically removes the terminal AMP residue from uncharged tRNA (tRNA-C-C-A). Also appears to be involved in tRNA biosynthesis.</text>
</comment>
<comment type="cofactor">
    <cofactor evidence="1">
        <name>Mg(2+)</name>
        <dbReference type="ChEBI" id="CHEBI:18420"/>
    </cofactor>
    <text evidence="1">Binds two Mg(2+) per subunit. The active form of the enzyme binds two Mg(2+) ions in its active site. The first Mg(2+) forms only one salt bridge with the protein.</text>
</comment>
<comment type="subunit">
    <text evidence="1">Homodimer.</text>
</comment>
<comment type="similarity">
    <text evidence="1">Belongs to the RNase T family.</text>
</comment>
<protein>
    <recommendedName>
        <fullName evidence="1">Ribonuclease T</fullName>
        <ecNumber evidence="1">3.1.13.-</ecNumber>
    </recommendedName>
    <alternativeName>
        <fullName evidence="1">Exoribonuclease T</fullName>
        <shortName evidence="1">RNase T</shortName>
    </alternativeName>
</protein>
<dbReference type="EC" id="3.1.13.-" evidence="1"/>
<dbReference type="EMBL" id="CP000653">
    <property type="protein sequence ID" value="ABP60473.1"/>
    <property type="molecule type" value="Genomic_DNA"/>
</dbReference>
<dbReference type="RefSeq" id="WP_012017188.1">
    <property type="nucleotide sequence ID" value="NC_009436.1"/>
</dbReference>
<dbReference type="SMR" id="A4W9U3"/>
<dbReference type="STRING" id="399742.Ent638_1794"/>
<dbReference type="KEGG" id="ent:Ent638_1794"/>
<dbReference type="eggNOG" id="COG0847">
    <property type="taxonomic scope" value="Bacteria"/>
</dbReference>
<dbReference type="HOGENOM" id="CLU_082724_0_0_6"/>
<dbReference type="OrthoDB" id="9778264at2"/>
<dbReference type="Proteomes" id="UP000000230">
    <property type="component" value="Chromosome"/>
</dbReference>
<dbReference type="GO" id="GO:0005829">
    <property type="term" value="C:cytosol"/>
    <property type="evidence" value="ECO:0007669"/>
    <property type="project" value="TreeGrafter"/>
</dbReference>
<dbReference type="GO" id="GO:0008408">
    <property type="term" value="F:3'-5' exonuclease activity"/>
    <property type="evidence" value="ECO:0007669"/>
    <property type="project" value="TreeGrafter"/>
</dbReference>
<dbReference type="GO" id="GO:0000287">
    <property type="term" value="F:magnesium ion binding"/>
    <property type="evidence" value="ECO:0007669"/>
    <property type="project" value="UniProtKB-UniRule"/>
</dbReference>
<dbReference type="GO" id="GO:0003676">
    <property type="term" value="F:nucleic acid binding"/>
    <property type="evidence" value="ECO:0007669"/>
    <property type="project" value="InterPro"/>
</dbReference>
<dbReference type="GO" id="GO:0016896">
    <property type="term" value="F:RNA exonuclease activity, producing 5'-phosphomonoesters"/>
    <property type="evidence" value="ECO:0007669"/>
    <property type="project" value="UniProtKB-UniRule"/>
</dbReference>
<dbReference type="GO" id="GO:0045004">
    <property type="term" value="P:DNA replication proofreading"/>
    <property type="evidence" value="ECO:0007669"/>
    <property type="project" value="TreeGrafter"/>
</dbReference>
<dbReference type="GO" id="GO:0008033">
    <property type="term" value="P:tRNA processing"/>
    <property type="evidence" value="ECO:0007669"/>
    <property type="project" value="UniProtKB-KW"/>
</dbReference>
<dbReference type="CDD" id="cd06134">
    <property type="entry name" value="RNaseT"/>
    <property type="match status" value="1"/>
</dbReference>
<dbReference type="FunFam" id="3.30.420.10:FF:000009">
    <property type="entry name" value="Ribonuclease T"/>
    <property type="match status" value="1"/>
</dbReference>
<dbReference type="Gene3D" id="3.30.420.10">
    <property type="entry name" value="Ribonuclease H-like superfamily/Ribonuclease H"/>
    <property type="match status" value="1"/>
</dbReference>
<dbReference type="HAMAP" id="MF_00157">
    <property type="entry name" value="RNase_T"/>
    <property type="match status" value="1"/>
</dbReference>
<dbReference type="InterPro" id="IPR013520">
    <property type="entry name" value="Exonuclease_RNaseT/DNA_pol3"/>
</dbReference>
<dbReference type="InterPro" id="IPR005987">
    <property type="entry name" value="RNase_T"/>
</dbReference>
<dbReference type="InterPro" id="IPR012337">
    <property type="entry name" value="RNaseH-like_sf"/>
</dbReference>
<dbReference type="InterPro" id="IPR036397">
    <property type="entry name" value="RNaseH_sf"/>
</dbReference>
<dbReference type="NCBIfam" id="TIGR01298">
    <property type="entry name" value="RNaseT"/>
    <property type="match status" value="1"/>
</dbReference>
<dbReference type="PANTHER" id="PTHR30231">
    <property type="entry name" value="DNA POLYMERASE III SUBUNIT EPSILON"/>
    <property type="match status" value="1"/>
</dbReference>
<dbReference type="PANTHER" id="PTHR30231:SF2">
    <property type="entry name" value="RIBONUCLEASE T"/>
    <property type="match status" value="1"/>
</dbReference>
<dbReference type="Pfam" id="PF00929">
    <property type="entry name" value="RNase_T"/>
    <property type="match status" value="1"/>
</dbReference>
<dbReference type="SMART" id="SM00479">
    <property type="entry name" value="EXOIII"/>
    <property type="match status" value="1"/>
</dbReference>
<dbReference type="SUPFAM" id="SSF53098">
    <property type="entry name" value="Ribonuclease H-like"/>
    <property type="match status" value="1"/>
</dbReference>
<sequence length="224" mass="24647">MSDNAQLTGLCDRFRGFYPVVIDVETAGFNAKTDALLEIAAITLKMDEQGWLTPDTTLHFHVDPFEGANLQPEALAFNGIDPHNPLRGAVSEYDALHAIYKMVRKGMKDSNCNRAIMVAHNATFDHSFMMAASERASLKRNPFHPFVTFDTAALSGLALGQTVLSKACITAGIDFDGNQAHSALYDTERTAELFCEIVNRWKRLGGWPLPMAESDSDSDSDSEE</sequence>
<proteinExistence type="inferred from homology"/>
<name>RNT_ENT38</name>
<gene>
    <name evidence="1" type="primary">rnt</name>
    <name type="ordered locus">Ent638_1794</name>
</gene>
<evidence type="ECO:0000255" key="1">
    <source>
        <dbReference type="HAMAP-Rule" id="MF_00157"/>
    </source>
</evidence>